<evidence type="ECO:0000255" key="1">
    <source>
        <dbReference type="HAMAP-Rule" id="MF_01694"/>
    </source>
</evidence>
<evidence type="ECO:0000255" key="2">
    <source>
        <dbReference type="PROSITE-ProRule" id="PRU01266"/>
    </source>
</evidence>
<feature type="chain" id="PRO_0000381693" description="Biotin synthase">
    <location>
        <begin position="1"/>
        <end position="319"/>
    </location>
</feature>
<feature type="domain" description="Radical SAM core" evidence="2">
    <location>
        <begin position="41"/>
        <end position="267"/>
    </location>
</feature>
<feature type="binding site" evidence="1">
    <location>
        <position position="59"/>
    </location>
    <ligand>
        <name>[4Fe-4S] cluster</name>
        <dbReference type="ChEBI" id="CHEBI:49883"/>
        <note>4Fe-4S-S-AdoMet</note>
    </ligand>
</feature>
<feature type="binding site" evidence="1">
    <location>
        <position position="63"/>
    </location>
    <ligand>
        <name>[4Fe-4S] cluster</name>
        <dbReference type="ChEBI" id="CHEBI:49883"/>
        <note>4Fe-4S-S-AdoMet</note>
    </ligand>
</feature>
<feature type="binding site" evidence="1">
    <location>
        <position position="66"/>
    </location>
    <ligand>
        <name>[4Fe-4S] cluster</name>
        <dbReference type="ChEBI" id="CHEBI:49883"/>
        <note>4Fe-4S-S-AdoMet</note>
    </ligand>
</feature>
<feature type="binding site" evidence="1">
    <location>
        <position position="192"/>
    </location>
    <ligand>
        <name>[2Fe-2S] cluster</name>
        <dbReference type="ChEBI" id="CHEBI:190135"/>
    </ligand>
</feature>
<accession>B1GYW9</accession>
<proteinExistence type="inferred from homology"/>
<dbReference type="EC" id="2.8.1.6" evidence="1"/>
<dbReference type="EMBL" id="AP009510">
    <property type="protein sequence ID" value="BAG14212.1"/>
    <property type="molecule type" value="Genomic_DNA"/>
</dbReference>
<dbReference type="RefSeq" id="WP_015423733.1">
    <property type="nucleotide sequence ID" value="NC_020419.1"/>
</dbReference>
<dbReference type="SMR" id="B1GYW9"/>
<dbReference type="STRING" id="471821.TGRD_729"/>
<dbReference type="KEGG" id="rsd:TGRD_729"/>
<dbReference type="PATRIC" id="fig|471821.5.peg.1247"/>
<dbReference type="HOGENOM" id="CLU_033172_2_1_0"/>
<dbReference type="UniPathway" id="UPA00078">
    <property type="reaction ID" value="UER00162"/>
</dbReference>
<dbReference type="Proteomes" id="UP000001691">
    <property type="component" value="Chromosome"/>
</dbReference>
<dbReference type="GO" id="GO:0051537">
    <property type="term" value="F:2 iron, 2 sulfur cluster binding"/>
    <property type="evidence" value="ECO:0007669"/>
    <property type="project" value="UniProtKB-KW"/>
</dbReference>
<dbReference type="GO" id="GO:0051539">
    <property type="term" value="F:4 iron, 4 sulfur cluster binding"/>
    <property type="evidence" value="ECO:0007669"/>
    <property type="project" value="UniProtKB-KW"/>
</dbReference>
<dbReference type="GO" id="GO:0004076">
    <property type="term" value="F:biotin synthase activity"/>
    <property type="evidence" value="ECO:0007669"/>
    <property type="project" value="UniProtKB-UniRule"/>
</dbReference>
<dbReference type="GO" id="GO:0005506">
    <property type="term" value="F:iron ion binding"/>
    <property type="evidence" value="ECO:0007669"/>
    <property type="project" value="UniProtKB-UniRule"/>
</dbReference>
<dbReference type="GO" id="GO:0009102">
    <property type="term" value="P:biotin biosynthetic process"/>
    <property type="evidence" value="ECO:0007669"/>
    <property type="project" value="UniProtKB-UniRule"/>
</dbReference>
<dbReference type="CDD" id="cd01335">
    <property type="entry name" value="Radical_SAM"/>
    <property type="match status" value="1"/>
</dbReference>
<dbReference type="Gene3D" id="3.20.20.70">
    <property type="entry name" value="Aldolase class I"/>
    <property type="match status" value="1"/>
</dbReference>
<dbReference type="HAMAP" id="MF_01694">
    <property type="entry name" value="BioB"/>
    <property type="match status" value="1"/>
</dbReference>
<dbReference type="InterPro" id="IPR013785">
    <property type="entry name" value="Aldolase_TIM"/>
</dbReference>
<dbReference type="InterPro" id="IPR010722">
    <property type="entry name" value="BATS_dom"/>
</dbReference>
<dbReference type="InterPro" id="IPR002684">
    <property type="entry name" value="Biotin_synth/BioAB"/>
</dbReference>
<dbReference type="InterPro" id="IPR024177">
    <property type="entry name" value="Biotin_synthase"/>
</dbReference>
<dbReference type="InterPro" id="IPR006638">
    <property type="entry name" value="Elp3/MiaA/NifB-like_rSAM"/>
</dbReference>
<dbReference type="InterPro" id="IPR007197">
    <property type="entry name" value="rSAM"/>
</dbReference>
<dbReference type="NCBIfam" id="TIGR00433">
    <property type="entry name" value="bioB"/>
    <property type="match status" value="1"/>
</dbReference>
<dbReference type="PANTHER" id="PTHR22976">
    <property type="entry name" value="BIOTIN SYNTHASE"/>
    <property type="match status" value="1"/>
</dbReference>
<dbReference type="PANTHER" id="PTHR22976:SF2">
    <property type="entry name" value="BIOTIN SYNTHASE, MITOCHONDRIAL"/>
    <property type="match status" value="1"/>
</dbReference>
<dbReference type="Pfam" id="PF06968">
    <property type="entry name" value="BATS"/>
    <property type="match status" value="1"/>
</dbReference>
<dbReference type="Pfam" id="PF04055">
    <property type="entry name" value="Radical_SAM"/>
    <property type="match status" value="1"/>
</dbReference>
<dbReference type="PIRSF" id="PIRSF001619">
    <property type="entry name" value="Biotin_synth"/>
    <property type="match status" value="1"/>
</dbReference>
<dbReference type="SFLD" id="SFLDG01060">
    <property type="entry name" value="BATS_domain_containing"/>
    <property type="match status" value="1"/>
</dbReference>
<dbReference type="SFLD" id="SFLDG01278">
    <property type="entry name" value="biotin_synthase_like"/>
    <property type="match status" value="1"/>
</dbReference>
<dbReference type="SMART" id="SM00876">
    <property type="entry name" value="BATS"/>
    <property type="match status" value="1"/>
</dbReference>
<dbReference type="SMART" id="SM00729">
    <property type="entry name" value="Elp3"/>
    <property type="match status" value="1"/>
</dbReference>
<dbReference type="SUPFAM" id="SSF102114">
    <property type="entry name" value="Radical SAM enzymes"/>
    <property type="match status" value="1"/>
</dbReference>
<dbReference type="PROSITE" id="PS51918">
    <property type="entry name" value="RADICAL_SAM"/>
    <property type="match status" value="1"/>
</dbReference>
<keyword id="KW-0001">2Fe-2S</keyword>
<keyword id="KW-0004">4Fe-4S</keyword>
<keyword id="KW-0093">Biotin biosynthesis</keyword>
<keyword id="KW-0408">Iron</keyword>
<keyword id="KW-0411">Iron-sulfur</keyword>
<keyword id="KW-0479">Metal-binding</keyword>
<keyword id="KW-0949">S-adenosyl-L-methionine</keyword>
<keyword id="KW-0808">Transferase</keyword>
<name>BIOB_ENDTX</name>
<gene>
    <name evidence="1" type="primary">bioB</name>
    <name type="ordered locus">TGRD_729</name>
</gene>
<sequence>MENLILEIISGKQVTKEEALKFFDFELEEIFFAATKIRRKYKGNKVKVCSIINAKSGQCSEDCRFCTQSTFNKTDVKVYSLTDTEKIKEFSTKALENVGCFGIVSSGNSLNDVEIEKLCEMFKNHKKVSHLGVSIGKISDETFLKLKEAGIKKMHHNLETSENFYPNICSTHNYQERVDTIKRAKKFGFEICSGGLFGMGESLKDRIDLAFTLKALDANSIPMNFLMHIKGTALEHLPALPPVEILKTIAVFRIILKTPDIMICGGREVNLRDLQSWIFQAGANGMMTGGYLTTIGRDITSDKQMIKDLGLEIEPNHTY</sequence>
<reference key="1">
    <citation type="journal article" date="2008" name="Proc. Natl. Acad. Sci. U.S.A.">
        <title>Complete genome of the uncultured termite group 1 bacteria in a single host protist cell.</title>
        <authorList>
            <person name="Hongoh Y."/>
            <person name="Sharma V.K."/>
            <person name="Prakash T."/>
            <person name="Noda S."/>
            <person name="Taylor T.D."/>
            <person name="Kudo T."/>
            <person name="Sakaki Y."/>
            <person name="Toyoda A."/>
            <person name="Hattori M."/>
            <person name="Ohkuma M."/>
        </authorList>
    </citation>
    <scope>NUCLEOTIDE SEQUENCE [LARGE SCALE GENOMIC DNA]</scope>
</reference>
<organism>
    <name type="scientific">Endomicrobium trichonymphae</name>
    <dbReference type="NCBI Taxonomy" id="1408204"/>
    <lineage>
        <taxon>Bacteria</taxon>
        <taxon>Pseudomonadati</taxon>
        <taxon>Elusimicrobiota</taxon>
        <taxon>Endomicrobiia</taxon>
        <taxon>Endomicrobiales</taxon>
        <taxon>Endomicrobiaceae</taxon>
        <taxon>Candidatus Endomicrobiellum</taxon>
    </lineage>
</organism>
<comment type="function">
    <text evidence="1">Catalyzes the conversion of dethiobiotin (DTB) to biotin by the insertion of a sulfur atom into dethiobiotin via a radical-based mechanism.</text>
</comment>
<comment type="catalytic activity">
    <reaction evidence="1">
        <text>(4R,5S)-dethiobiotin + (sulfur carrier)-SH + 2 reduced [2Fe-2S]-[ferredoxin] + 2 S-adenosyl-L-methionine = (sulfur carrier)-H + biotin + 2 5'-deoxyadenosine + 2 L-methionine + 2 oxidized [2Fe-2S]-[ferredoxin]</text>
        <dbReference type="Rhea" id="RHEA:22060"/>
        <dbReference type="Rhea" id="RHEA-COMP:10000"/>
        <dbReference type="Rhea" id="RHEA-COMP:10001"/>
        <dbReference type="Rhea" id="RHEA-COMP:14737"/>
        <dbReference type="Rhea" id="RHEA-COMP:14739"/>
        <dbReference type="ChEBI" id="CHEBI:17319"/>
        <dbReference type="ChEBI" id="CHEBI:29917"/>
        <dbReference type="ChEBI" id="CHEBI:33737"/>
        <dbReference type="ChEBI" id="CHEBI:33738"/>
        <dbReference type="ChEBI" id="CHEBI:57586"/>
        <dbReference type="ChEBI" id="CHEBI:57844"/>
        <dbReference type="ChEBI" id="CHEBI:59789"/>
        <dbReference type="ChEBI" id="CHEBI:64428"/>
        <dbReference type="ChEBI" id="CHEBI:149473"/>
        <dbReference type="EC" id="2.8.1.6"/>
    </reaction>
</comment>
<comment type="cofactor">
    <cofactor evidence="1">
        <name>[4Fe-4S] cluster</name>
        <dbReference type="ChEBI" id="CHEBI:49883"/>
    </cofactor>
    <text evidence="1">Binds 1 [4Fe-4S] cluster. The cluster is coordinated with 3 cysteines and an exchangeable S-adenosyl-L-methionine.</text>
</comment>
<comment type="cofactor">
    <cofactor evidence="1">
        <name>[2Fe-2S] cluster</name>
        <dbReference type="ChEBI" id="CHEBI:190135"/>
    </cofactor>
    <text evidence="1">Binds 1 [2Fe-2S] cluster. The cluster is coordinated with 3 cysteines and 1 arginine.</text>
</comment>
<comment type="pathway">
    <text evidence="1">Cofactor biosynthesis; biotin biosynthesis; biotin from 7,8-diaminononanoate: step 2/2.</text>
</comment>
<comment type="subunit">
    <text evidence="1">Homodimer.</text>
</comment>
<comment type="similarity">
    <text evidence="1">Belongs to the radical SAM superfamily. Biotin synthase family.</text>
</comment>
<protein>
    <recommendedName>
        <fullName evidence="1">Biotin synthase</fullName>
        <ecNumber evidence="1">2.8.1.6</ecNumber>
    </recommendedName>
</protein>